<organism>
    <name type="scientific">Magnetococcus marinus (strain ATCC BAA-1437 / JCM 17883 / MC-1)</name>
    <dbReference type="NCBI Taxonomy" id="156889"/>
    <lineage>
        <taxon>Bacteria</taxon>
        <taxon>Pseudomonadati</taxon>
        <taxon>Pseudomonadota</taxon>
        <taxon>Alphaproteobacteria</taxon>
        <taxon>Magnetococcales</taxon>
        <taxon>Magnetococcaceae</taxon>
        <taxon>Magnetococcus</taxon>
    </lineage>
</organism>
<keyword id="KW-0028">Amino-acid biosynthesis</keyword>
<keyword id="KW-0057">Aromatic amino acid biosynthesis</keyword>
<keyword id="KW-0274">FAD</keyword>
<keyword id="KW-0285">Flavoprotein</keyword>
<keyword id="KW-0288">FMN</keyword>
<keyword id="KW-0456">Lyase</keyword>
<keyword id="KW-0521">NADP</keyword>
<keyword id="KW-1185">Reference proteome</keyword>
<reference key="1">
    <citation type="journal article" date="2009" name="Appl. Environ. Microbiol.">
        <title>Complete genome sequence of the chemolithoautotrophic marine magnetotactic coccus strain MC-1.</title>
        <authorList>
            <person name="Schubbe S."/>
            <person name="Williams T.J."/>
            <person name="Xie G."/>
            <person name="Kiss H.E."/>
            <person name="Brettin T.S."/>
            <person name="Martinez D."/>
            <person name="Ross C.A."/>
            <person name="Schuler D."/>
            <person name="Cox B.L."/>
            <person name="Nealson K.H."/>
            <person name="Bazylinski D.A."/>
        </authorList>
    </citation>
    <scope>NUCLEOTIDE SEQUENCE [LARGE SCALE GENOMIC DNA]</scope>
    <source>
        <strain>ATCC BAA-1437 / JCM 17883 / MC-1</strain>
    </source>
</reference>
<accession>A0LDR1</accession>
<sequence length="361" mass="38740">MAGSQIGTLFQVATFGESHGLALGGVVDGCPAGLELSEADLQGDLNRRRPGQSRFTTQRQERDEVKILSGVFEGRTTGTPIGFIIENEDQRSKDYSEIKDKFRPGHADFTYWSKYGNRDYRGGGRSSARETAIRVAAGAIAKKLLRQAEGVTVRGALTGMGPVVIEPSRWDWAEVERNHFFSPDAGSVGEFEAYLEGIRKAGNSVGAFLEVHAEGVPIGLGEPVFDRLDADLAKAVMSINAVKGVEIGAGMASGHATGVDFADEMRPGVDARHPEFVRNHAGGILGGISTGQPIVIRFAVKPTSSILVPRQSVDVHGQACEVVTKGRHDPCVGIRAVPIAEAMVAMTLADHWLRWRASKPL</sequence>
<comment type="function">
    <text evidence="1">Catalyzes the anti-1,4-elimination of the C-3 phosphate and the C-6 proR hydrogen from 5-enolpyruvylshikimate-3-phosphate (EPSP) to yield chorismate, which is the branch point compound that serves as the starting substrate for the three terminal pathways of aromatic amino acid biosynthesis. This reaction introduces a second double bond into the aromatic ring system.</text>
</comment>
<comment type="catalytic activity">
    <reaction evidence="1">
        <text>5-O-(1-carboxyvinyl)-3-phosphoshikimate = chorismate + phosphate</text>
        <dbReference type="Rhea" id="RHEA:21020"/>
        <dbReference type="ChEBI" id="CHEBI:29748"/>
        <dbReference type="ChEBI" id="CHEBI:43474"/>
        <dbReference type="ChEBI" id="CHEBI:57701"/>
        <dbReference type="EC" id="4.2.3.5"/>
    </reaction>
</comment>
<comment type="cofactor">
    <cofactor evidence="1">
        <name>FMNH2</name>
        <dbReference type="ChEBI" id="CHEBI:57618"/>
    </cofactor>
    <text evidence="1">Reduced FMN (FMNH(2)).</text>
</comment>
<comment type="pathway">
    <text evidence="1">Metabolic intermediate biosynthesis; chorismate biosynthesis; chorismate from D-erythrose 4-phosphate and phosphoenolpyruvate: step 7/7.</text>
</comment>
<comment type="subunit">
    <text evidence="1">Homotetramer.</text>
</comment>
<comment type="similarity">
    <text evidence="1">Belongs to the chorismate synthase family.</text>
</comment>
<evidence type="ECO:0000255" key="1">
    <source>
        <dbReference type="HAMAP-Rule" id="MF_00300"/>
    </source>
</evidence>
<dbReference type="EC" id="4.2.3.5" evidence="1"/>
<dbReference type="EMBL" id="CP000471">
    <property type="protein sequence ID" value="ABK46104.1"/>
    <property type="molecule type" value="Genomic_DNA"/>
</dbReference>
<dbReference type="RefSeq" id="WP_011715158.1">
    <property type="nucleotide sequence ID" value="NC_008576.1"/>
</dbReference>
<dbReference type="SMR" id="A0LDR1"/>
<dbReference type="STRING" id="156889.Mmc1_3619"/>
<dbReference type="KEGG" id="mgm:Mmc1_3619"/>
<dbReference type="eggNOG" id="COG0082">
    <property type="taxonomic scope" value="Bacteria"/>
</dbReference>
<dbReference type="HOGENOM" id="CLU_034547_0_2_5"/>
<dbReference type="OrthoDB" id="9771806at2"/>
<dbReference type="UniPathway" id="UPA00053">
    <property type="reaction ID" value="UER00090"/>
</dbReference>
<dbReference type="Proteomes" id="UP000002586">
    <property type="component" value="Chromosome"/>
</dbReference>
<dbReference type="GO" id="GO:0005829">
    <property type="term" value="C:cytosol"/>
    <property type="evidence" value="ECO:0007669"/>
    <property type="project" value="TreeGrafter"/>
</dbReference>
<dbReference type="GO" id="GO:0004107">
    <property type="term" value="F:chorismate synthase activity"/>
    <property type="evidence" value="ECO:0007669"/>
    <property type="project" value="UniProtKB-UniRule"/>
</dbReference>
<dbReference type="GO" id="GO:0010181">
    <property type="term" value="F:FMN binding"/>
    <property type="evidence" value="ECO:0007669"/>
    <property type="project" value="TreeGrafter"/>
</dbReference>
<dbReference type="GO" id="GO:0008652">
    <property type="term" value="P:amino acid biosynthetic process"/>
    <property type="evidence" value="ECO:0007669"/>
    <property type="project" value="UniProtKB-KW"/>
</dbReference>
<dbReference type="GO" id="GO:0009073">
    <property type="term" value="P:aromatic amino acid family biosynthetic process"/>
    <property type="evidence" value="ECO:0007669"/>
    <property type="project" value="UniProtKB-KW"/>
</dbReference>
<dbReference type="GO" id="GO:0009423">
    <property type="term" value="P:chorismate biosynthetic process"/>
    <property type="evidence" value="ECO:0007669"/>
    <property type="project" value="UniProtKB-UniRule"/>
</dbReference>
<dbReference type="CDD" id="cd07304">
    <property type="entry name" value="Chorismate_synthase"/>
    <property type="match status" value="1"/>
</dbReference>
<dbReference type="Gene3D" id="3.60.150.10">
    <property type="entry name" value="Chorismate synthase AroC"/>
    <property type="match status" value="1"/>
</dbReference>
<dbReference type="HAMAP" id="MF_00300">
    <property type="entry name" value="Chorismate_synth"/>
    <property type="match status" value="1"/>
</dbReference>
<dbReference type="InterPro" id="IPR000453">
    <property type="entry name" value="Chorismate_synth"/>
</dbReference>
<dbReference type="InterPro" id="IPR035904">
    <property type="entry name" value="Chorismate_synth_AroC_sf"/>
</dbReference>
<dbReference type="InterPro" id="IPR020541">
    <property type="entry name" value="Chorismate_synthase_CS"/>
</dbReference>
<dbReference type="NCBIfam" id="TIGR00033">
    <property type="entry name" value="aroC"/>
    <property type="match status" value="1"/>
</dbReference>
<dbReference type="NCBIfam" id="NF003793">
    <property type="entry name" value="PRK05382.1"/>
    <property type="match status" value="1"/>
</dbReference>
<dbReference type="PANTHER" id="PTHR21085">
    <property type="entry name" value="CHORISMATE SYNTHASE"/>
    <property type="match status" value="1"/>
</dbReference>
<dbReference type="PANTHER" id="PTHR21085:SF0">
    <property type="entry name" value="CHORISMATE SYNTHASE"/>
    <property type="match status" value="1"/>
</dbReference>
<dbReference type="Pfam" id="PF01264">
    <property type="entry name" value="Chorismate_synt"/>
    <property type="match status" value="1"/>
</dbReference>
<dbReference type="PIRSF" id="PIRSF001456">
    <property type="entry name" value="Chorismate_synth"/>
    <property type="match status" value="1"/>
</dbReference>
<dbReference type="SUPFAM" id="SSF103263">
    <property type="entry name" value="Chorismate synthase, AroC"/>
    <property type="match status" value="1"/>
</dbReference>
<dbReference type="PROSITE" id="PS00787">
    <property type="entry name" value="CHORISMATE_SYNTHASE_1"/>
    <property type="match status" value="1"/>
</dbReference>
<dbReference type="PROSITE" id="PS00788">
    <property type="entry name" value="CHORISMATE_SYNTHASE_2"/>
    <property type="match status" value="1"/>
</dbReference>
<dbReference type="PROSITE" id="PS00789">
    <property type="entry name" value="CHORISMATE_SYNTHASE_3"/>
    <property type="match status" value="1"/>
</dbReference>
<proteinExistence type="inferred from homology"/>
<gene>
    <name evidence="1" type="primary">aroC</name>
    <name type="ordered locus">Mmc1_3619</name>
</gene>
<protein>
    <recommendedName>
        <fullName evidence="1">Chorismate synthase</fullName>
        <shortName evidence="1">CS</shortName>
        <ecNumber evidence="1">4.2.3.5</ecNumber>
    </recommendedName>
    <alternativeName>
        <fullName evidence="1">5-enolpyruvylshikimate-3-phosphate phospholyase</fullName>
    </alternativeName>
</protein>
<name>AROC_MAGMM</name>
<feature type="chain" id="PRO_0000322407" description="Chorismate synthase">
    <location>
        <begin position="1"/>
        <end position="361"/>
    </location>
</feature>
<feature type="binding site" evidence="1">
    <location>
        <position position="48"/>
    </location>
    <ligand>
        <name>NADP(+)</name>
        <dbReference type="ChEBI" id="CHEBI:58349"/>
    </ligand>
</feature>
<feature type="binding site" evidence="1">
    <location>
        <position position="54"/>
    </location>
    <ligand>
        <name>NADP(+)</name>
        <dbReference type="ChEBI" id="CHEBI:58349"/>
    </ligand>
</feature>
<feature type="binding site" evidence="1">
    <location>
        <begin position="125"/>
        <end position="127"/>
    </location>
    <ligand>
        <name>FMN</name>
        <dbReference type="ChEBI" id="CHEBI:58210"/>
    </ligand>
</feature>
<feature type="binding site" evidence="1">
    <location>
        <begin position="240"/>
        <end position="241"/>
    </location>
    <ligand>
        <name>FMN</name>
        <dbReference type="ChEBI" id="CHEBI:58210"/>
    </ligand>
</feature>
<feature type="binding site" evidence="1">
    <location>
        <position position="286"/>
    </location>
    <ligand>
        <name>FMN</name>
        <dbReference type="ChEBI" id="CHEBI:58210"/>
    </ligand>
</feature>
<feature type="binding site" evidence="1">
    <location>
        <begin position="301"/>
        <end position="305"/>
    </location>
    <ligand>
        <name>FMN</name>
        <dbReference type="ChEBI" id="CHEBI:58210"/>
    </ligand>
</feature>
<feature type="binding site" evidence="1">
    <location>
        <position position="327"/>
    </location>
    <ligand>
        <name>FMN</name>
        <dbReference type="ChEBI" id="CHEBI:58210"/>
    </ligand>
</feature>